<reference key="1">
    <citation type="submission" date="2007-03" db="EMBL/GenBank/DDBJ databases">
        <title>Complete sequence of chromosome of Methanococcus maripaludis C5.</title>
        <authorList>
            <consortium name="US DOE Joint Genome Institute"/>
            <person name="Copeland A."/>
            <person name="Lucas S."/>
            <person name="Lapidus A."/>
            <person name="Barry K."/>
            <person name="Glavina del Rio T."/>
            <person name="Dalin E."/>
            <person name="Tice H."/>
            <person name="Pitluck S."/>
            <person name="Chertkov O."/>
            <person name="Brettin T."/>
            <person name="Bruce D."/>
            <person name="Han C."/>
            <person name="Detter J.C."/>
            <person name="Schmutz J."/>
            <person name="Larimer F."/>
            <person name="Land M."/>
            <person name="Hauser L."/>
            <person name="Kyrpides N."/>
            <person name="Mikhailova N."/>
            <person name="Sieprawska-Lupa M."/>
            <person name="Whitman W.B."/>
            <person name="Richardson P."/>
        </authorList>
    </citation>
    <scope>NUCLEOTIDE SEQUENCE [LARGE SCALE GENOMIC DNA]</scope>
    <source>
        <strain>C5 / ATCC BAA-1333</strain>
    </source>
</reference>
<dbReference type="EMBL" id="CP000609">
    <property type="protein sequence ID" value="ABO35813.1"/>
    <property type="molecule type" value="Genomic_DNA"/>
</dbReference>
<dbReference type="RefSeq" id="WP_011170103.1">
    <property type="nucleotide sequence ID" value="NC_009135.1"/>
</dbReference>
<dbReference type="SMR" id="A4G029"/>
<dbReference type="STRING" id="402880.MmarC5_1516"/>
<dbReference type="GeneID" id="4928564"/>
<dbReference type="KEGG" id="mmq:MmarC5_1516"/>
<dbReference type="eggNOG" id="arCOG04177">
    <property type="taxonomic scope" value="Archaea"/>
</dbReference>
<dbReference type="HOGENOM" id="CLU_181948_4_0_2"/>
<dbReference type="OrthoDB" id="65887at2157"/>
<dbReference type="Proteomes" id="UP000000253">
    <property type="component" value="Chromosome"/>
</dbReference>
<dbReference type="GO" id="GO:1990904">
    <property type="term" value="C:ribonucleoprotein complex"/>
    <property type="evidence" value="ECO:0007669"/>
    <property type="project" value="UniProtKB-KW"/>
</dbReference>
<dbReference type="GO" id="GO:0005840">
    <property type="term" value="C:ribosome"/>
    <property type="evidence" value="ECO:0007669"/>
    <property type="project" value="UniProtKB-KW"/>
</dbReference>
<dbReference type="GO" id="GO:0003735">
    <property type="term" value="F:structural constituent of ribosome"/>
    <property type="evidence" value="ECO:0007669"/>
    <property type="project" value="InterPro"/>
</dbReference>
<dbReference type="GO" id="GO:0006412">
    <property type="term" value="P:translation"/>
    <property type="evidence" value="ECO:0007669"/>
    <property type="project" value="UniProtKB-UniRule"/>
</dbReference>
<dbReference type="Gene3D" id="1.10.1620.10">
    <property type="entry name" value="Ribosomal protein L39e"/>
    <property type="match status" value="1"/>
</dbReference>
<dbReference type="HAMAP" id="MF_00629">
    <property type="entry name" value="Ribosomal_eL39"/>
    <property type="match status" value="1"/>
</dbReference>
<dbReference type="InterPro" id="IPR000077">
    <property type="entry name" value="Ribosomal_eL39"/>
</dbReference>
<dbReference type="InterPro" id="IPR020083">
    <property type="entry name" value="Ribosomal_eL39_CS"/>
</dbReference>
<dbReference type="InterPro" id="IPR023626">
    <property type="entry name" value="Ribosomal_eL39_dom_sf"/>
</dbReference>
<dbReference type="NCBIfam" id="NF002316">
    <property type="entry name" value="PRK01242.1"/>
    <property type="match status" value="1"/>
</dbReference>
<dbReference type="Pfam" id="PF00832">
    <property type="entry name" value="Ribosomal_L39"/>
    <property type="match status" value="1"/>
</dbReference>
<dbReference type="SUPFAM" id="SSF48662">
    <property type="entry name" value="Ribosomal protein L39e"/>
    <property type="match status" value="1"/>
</dbReference>
<dbReference type="PROSITE" id="PS00051">
    <property type="entry name" value="RIBOSOMAL_L39E"/>
    <property type="match status" value="1"/>
</dbReference>
<organism>
    <name type="scientific">Methanococcus maripaludis (strain C5 / ATCC BAA-1333)</name>
    <dbReference type="NCBI Taxonomy" id="402880"/>
    <lineage>
        <taxon>Archaea</taxon>
        <taxon>Methanobacteriati</taxon>
        <taxon>Methanobacteriota</taxon>
        <taxon>Methanomada group</taxon>
        <taxon>Methanococci</taxon>
        <taxon>Methanococcales</taxon>
        <taxon>Methanococcaceae</taxon>
        <taxon>Methanococcus</taxon>
    </lineage>
</organism>
<evidence type="ECO:0000255" key="1">
    <source>
        <dbReference type="HAMAP-Rule" id="MF_00629"/>
    </source>
</evidence>
<evidence type="ECO:0000256" key="2">
    <source>
        <dbReference type="SAM" id="MobiDB-lite"/>
    </source>
</evidence>
<evidence type="ECO:0000305" key="3"/>
<gene>
    <name evidence="1" type="primary">rpl39e</name>
    <name type="ordered locus">MmarC5_1516</name>
</gene>
<protein>
    <recommendedName>
        <fullName evidence="1">Large ribosomal subunit protein eL39</fullName>
    </recommendedName>
    <alternativeName>
        <fullName evidence="3">50S ribosomal protein L39e</fullName>
    </alternativeName>
</protein>
<feature type="chain" id="PRO_1000051688" description="Large ribosomal subunit protein eL39">
    <location>
        <begin position="1"/>
        <end position="51"/>
    </location>
</feature>
<feature type="region of interest" description="Disordered" evidence="2">
    <location>
        <begin position="32"/>
        <end position="51"/>
    </location>
</feature>
<feature type="compositionally biased region" description="Basic residues" evidence="2">
    <location>
        <begin position="33"/>
        <end position="51"/>
    </location>
</feature>
<name>RL39_METM5</name>
<keyword id="KW-0687">Ribonucleoprotein</keyword>
<keyword id="KW-0689">Ribosomal protein</keyword>
<sequence>MAGNKPLGKKIRLAKALKQNRRVPMFAIARTKGSVKQHPKMRHWRRKNLKK</sequence>
<proteinExistence type="inferred from homology"/>
<comment type="similarity">
    <text evidence="1">Belongs to the eukaryotic ribosomal protein eL39 family.</text>
</comment>
<accession>A4G029</accession>